<evidence type="ECO:0000250" key="1"/>
<evidence type="ECO:0000255" key="2"/>
<evidence type="ECO:0000256" key="3">
    <source>
        <dbReference type="SAM" id="MobiDB-lite"/>
    </source>
</evidence>
<evidence type="ECO:0000269" key="4">
    <source>
    </source>
</evidence>
<evidence type="ECO:0000305" key="5"/>
<accession>Q62313</accession>
<dbReference type="EMBL" id="D50031">
    <property type="protein sequence ID" value="BAA08757.1"/>
    <property type="molecule type" value="mRNA"/>
</dbReference>
<dbReference type="EMBL" id="AK041302">
    <property type="protein sequence ID" value="BAC30896.1"/>
    <property type="molecule type" value="mRNA"/>
</dbReference>
<dbReference type="EMBL" id="AK076586">
    <property type="protein sequence ID" value="BAC36404.1"/>
    <property type="molecule type" value="mRNA"/>
</dbReference>
<dbReference type="EMBL" id="BC009143">
    <property type="protein sequence ID" value="AAH09143.1"/>
    <property type="molecule type" value="mRNA"/>
</dbReference>
<dbReference type="CCDS" id="CCDS51811.1"/>
<dbReference type="PIR" id="B56940">
    <property type="entry name" value="B56940"/>
</dbReference>
<dbReference type="RefSeq" id="NP_033469.1">
    <property type="nucleotide sequence ID" value="NM_009443.3"/>
</dbReference>
<dbReference type="SMR" id="Q62313"/>
<dbReference type="BioGRID" id="204365">
    <property type="interactions" value="1"/>
</dbReference>
<dbReference type="FunCoup" id="Q62313">
    <property type="interactions" value="4"/>
</dbReference>
<dbReference type="IntAct" id="Q62313">
    <property type="interactions" value="1"/>
</dbReference>
<dbReference type="STRING" id="10090.ENSMUSP00000068487"/>
<dbReference type="GlyConnect" id="2778">
    <property type="glycosylation" value="1 N-Linked glycan (1 site)"/>
</dbReference>
<dbReference type="GlyCosmos" id="Q62313">
    <property type="glycosylation" value="2 sites, 1 glycan"/>
</dbReference>
<dbReference type="GlyGen" id="Q62313">
    <property type="glycosylation" value="2 sites, 2 N-linked glycans (1 site)"/>
</dbReference>
<dbReference type="iPTMnet" id="Q62313"/>
<dbReference type="PhosphoSitePlus" id="Q62313"/>
<dbReference type="jPOST" id="Q62313"/>
<dbReference type="PaxDb" id="10090-ENSMUSP00000068487"/>
<dbReference type="ProteomicsDB" id="263170"/>
<dbReference type="Pumba" id="Q62313"/>
<dbReference type="Antibodypedia" id="2516">
    <property type="antibodies" value="348 antibodies from 33 providers"/>
</dbReference>
<dbReference type="DNASU" id="22134"/>
<dbReference type="Ensembl" id="ENSMUST00000070524.5">
    <property type="protein sequence ID" value="ENSMUSP00000068487.5"/>
    <property type="gene ID" value="ENSMUSG00000056429.5"/>
</dbReference>
<dbReference type="GeneID" id="22134"/>
<dbReference type="KEGG" id="mmu:22134"/>
<dbReference type="AGR" id="MGI:105080"/>
<dbReference type="CTD" id="22134"/>
<dbReference type="MGI" id="MGI:105080">
    <property type="gene designation" value="Tgoln1"/>
</dbReference>
<dbReference type="VEuPathDB" id="HostDB:ENSMUSG00000056429"/>
<dbReference type="eggNOG" id="ENOG502S6YU">
    <property type="taxonomic scope" value="Eukaryota"/>
</dbReference>
<dbReference type="GeneTree" id="ENSGT00530000064712"/>
<dbReference type="HOGENOM" id="CLU_047350_0_0_1"/>
<dbReference type="InParanoid" id="Q62313"/>
<dbReference type="OMA" id="QDSYNTE"/>
<dbReference type="OrthoDB" id="5846619at2759"/>
<dbReference type="PhylomeDB" id="Q62313"/>
<dbReference type="TreeFam" id="TF332514"/>
<dbReference type="Reactome" id="R-MMU-381426">
    <property type="pathway name" value="Regulation of Insulin-like Growth Factor (IGF) transport and uptake by Insulin-like Growth Factor Binding Proteins (IGFBPs)"/>
</dbReference>
<dbReference type="Reactome" id="R-MMU-432722">
    <property type="pathway name" value="Golgi Associated Vesicle Biogenesis"/>
</dbReference>
<dbReference type="Reactome" id="R-MMU-6811440">
    <property type="pathway name" value="Retrograde transport at the Trans-Golgi-Network"/>
</dbReference>
<dbReference type="Reactome" id="R-MMU-8856825">
    <property type="pathway name" value="Cargo recognition for clathrin-mediated endocytosis"/>
</dbReference>
<dbReference type="Reactome" id="R-MMU-8856828">
    <property type="pathway name" value="Clathrin-mediated endocytosis"/>
</dbReference>
<dbReference type="Reactome" id="R-MMU-8957275">
    <property type="pathway name" value="Post-translational protein phosphorylation"/>
</dbReference>
<dbReference type="BioGRID-ORCS" id="22134">
    <property type="hits" value="2 hits in 76 CRISPR screens"/>
</dbReference>
<dbReference type="ChiTaRS" id="Tgoln1">
    <property type="organism name" value="mouse"/>
</dbReference>
<dbReference type="PRO" id="PR:Q62313"/>
<dbReference type="Proteomes" id="UP000000589">
    <property type="component" value="Chromosome 6"/>
</dbReference>
<dbReference type="RNAct" id="Q62313">
    <property type="molecule type" value="protein"/>
</dbReference>
<dbReference type="Bgee" id="ENSMUSG00000056429">
    <property type="expression patterns" value="Expressed in left colon and 258 other cell types or tissues"/>
</dbReference>
<dbReference type="ExpressionAtlas" id="Q62313">
    <property type="expression patterns" value="baseline and differential"/>
</dbReference>
<dbReference type="GO" id="GO:0005768">
    <property type="term" value="C:endosome"/>
    <property type="evidence" value="ECO:0000314"/>
    <property type="project" value="MGI"/>
</dbReference>
<dbReference type="GO" id="GO:0005794">
    <property type="term" value="C:Golgi apparatus"/>
    <property type="evidence" value="ECO:0000314"/>
    <property type="project" value="MGI"/>
</dbReference>
<dbReference type="GO" id="GO:0005886">
    <property type="term" value="C:plasma membrane"/>
    <property type="evidence" value="ECO:0007669"/>
    <property type="project" value="UniProtKB-SubCell"/>
</dbReference>
<dbReference type="GO" id="GO:0005802">
    <property type="term" value="C:trans-Golgi network"/>
    <property type="evidence" value="ECO:0000314"/>
    <property type="project" value="MGI"/>
</dbReference>
<dbReference type="PANTHER" id="PTHR23211:SF0">
    <property type="entry name" value="TRANS-GOLGI NETWORK INTEGRAL MEMBRANE PROTEIN 2"/>
    <property type="match status" value="1"/>
</dbReference>
<dbReference type="PANTHER" id="PTHR23211">
    <property type="entry name" value="TRANS-GOLGI NETWORK INTEGRAL MEMBRANE PROTEIN TGN38"/>
    <property type="match status" value="1"/>
</dbReference>
<dbReference type="Pfam" id="PF17818">
    <property type="entry name" value="KCT2"/>
    <property type="match status" value="1"/>
</dbReference>
<proteinExistence type="evidence at protein level"/>
<organism>
    <name type="scientific">Mus musculus</name>
    <name type="common">Mouse</name>
    <dbReference type="NCBI Taxonomy" id="10090"/>
    <lineage>
        <taxon>Eukaryota</taxon>
        <taxon>Metazoa</taxon>
        <taxon>Chordata</taxon>
        <taxon>Craniata</taxon>
        <taxon>Vertebrata</taxon>
        <taxon>Euteleostomi</taxon>
        <taxon>Mammalia</taxon>
        <taxon>Eutheria</taxon>
        <taxon>Euarchontoglires</taxon>
        <taxon>Glires</taxon>
        <taxon>Rodentia</taxon>
        <taxon>Myomorpha</taxon>
        <taxon>Muroidea</taxon>
        <taxon>Muridae</taxon>
        <taxon>Murinae</taxon>
        <taxon>Mus</taxon>
        <taxon>Mus</taxon>
    </lineage>
</organism>
<gene>
    <name type="primary">Tgoln1</name>
    <name type="synonym">Ttgn1</name>
</gene>
<feature type="signal peptide" evidence="2">
    <location>
        <begin position="1"/>
        <end position="17"/>
    </location>
</feature>
<feature type="chain" id="PRO_0000022485" description="Trans-Golgi network integral membrane protein 1">
    <location>
        <begin position="18"/>
        <end position="353"/>
    </location>
</feature>
<feature type="topological domain" description="Extracellular" evidence="2">
    <location>
        <begin position="18"/>
        <end position="298"/>
    </location>
</feature>
<feature type="transmembrane region" description="Helical" evidence="2">
    <location>
        <begin position="299"/>
        <end position="319"/>
    </location>
</feature>
<feature type="topological domain" description="Cytoplasmic" evidence="2">
    <location>
        <begin position="320"/>
        <end position="353"/>
    </location>
</feature>
<feature type="repeat" description="1">
    <location>
        <begin position="131"/>
        <end position="138"/>
    </location>
</feature>
<feature type="repeat" description="2">
    <location>
        <begin position="139"/>
        <end position="146"/>
    </location>
</feature>
<feature type="repeat" description="3">
    <location>
        <begin position="147"/>
        <end position="154"/>
    </location>
</feature>
<feature type="repeat" description="4">
    <location>
        <begin position="155"/>
        <end position="162"/>
    </location>
</feature>
<feature type="repeat" description="5">
    <location>
        <begin position="163"/>
        <end position="170"/>
    </location>
</feature>
<feature type="repeat" description="6">
    <location>
        <begin position="171"/>
        <end position="178"/>
    </location>
</feature>
<feature type="region of interest" description="Disordered" evidence="3">
    <location>
        <begin position="23"/>
        <end position="293"/>
    </location>
</feature>
<feature type="region of interest" description="6 X 8 AA tandem repeats">
    <location>
        <begin position="131"/>
        <end position="178"/>
    </location>
</feature>
<feature type="short sequence motif" description="Endocytosis signal" evidence="1">
    <location>
        <begin position="346"/>
        <end position="349"/>
    </location>
</feature>
<feature type="compositionally biased region" description="Polar residues" evidence="3">
    <location>
        <begin position="29"/>
        <end position="57"/>
    </location>
</feature>
<feature type="compositionally biased region" description="Basic and acidic residues" evidence="3">
    <location>
        <begin position="94"/>
        <end position="107"/>
    </location>
</feature>
<feature type="compositionally biased region" description="Gly residues" evidence="3">
    <location>
        <begin position="137"/>
        <end position="150"/>
    </location>
</feature>
<feature type="compositionally biased region" description="Basic and acidic residues" evidence="3">
    <location>
        <begin position="161"/>
        <end position="178"/>
    </location>
</feature>
<feature type="compositionally biased region" description="Basic and acidic residues" evidence="3">
    <location>
        <begin position="186"/>
        <end position="200"/>
    </location>
</feature>
<feature type="compositionally biased region" description="Basic and acidic residues" evidence="3">
    <location>
        <begin position="220"/>
        <end position="242"/>
    </location>
</feature>
<feature type="compositionally biased region" description="Acidic residues" evidence="3">
    <location>
        <begin position="243"/>
        <end position="259"/>
    </location>
</feature>
<feature type="compositionally biased region" description="Polar residues" evidence="3">
    <location>
        <begin position="265"/>
        <end position="278"/>
    </location>
</feature>
<feature type="compositionally biased region" description="Basic and acidic residues" evidence="3">
    <location>
        <begin position="279"/>
        <end position="288"/>
    </location>
</feature>
<feature type="glycosylation site" description="N-linked (GlcNAc...) asparagine" evidence="4">
    <location>
        <position position="110"/>
    </location>
</feature>
<feature type="glycosylation site" description="N-linked (GlcNAc...) asparagine" evidence="2">
    <location>
        <position position="293"/>
    </location>
</feature>
<name>TGON1_MOUSE</name>
<sequence length="353" mass="37848">MRFQVALLLLSVAVARALPSVYKRDADSGDSQNPPNQPSKQSSTPLPSSNQVKTTRPTDGQGQKSDKKDQDKTTLAAVSSKAESGPRTAATDHSLGDSRRQPEKTDAELNETARPLSPVNPKLEKSDQSSTEDSGKPTGGNSGKPTGGDSGKPTEAGSNKATEDDSGKSTKVDLDKPTSKISPDTETSKTDKVQPTEKGQKPTLTSKTESGETLAGDSDFSLKPEKGDKSSEPTEDVETKEIEEGDTEPEEGSPLEEENEKVPGPSSSENQEGTLTDSMKNEKDDLYKDSSGNTSAESSHFFAYLVTAAVLVAVLYIAYHNKRKIIAFALEGKRSKVTRRPKASDYQRLNLKL</sequence>
<reference key="1">
    <citation type="journal article" date="1995" name="J. Biol. Chem.">
        <title>Strain-specific presence of two TGN38 isoforms and absence of TGN41 in mouse.</title>
        <authorList>
            <person name="Kasai K."/>
            <person name="Takahashi S."/>
            <person name="Murakami K."/>
            <person name="Nakayama K."/>
        </authorList>
    </citation>
    <scope>NUCLEOTIDE SEQUENCE [MRNA]</scope>
    <source>
        <strain>ICR</strain>
        <tissue>Brain</tissue>
    </source>
</reference>
<reference key="2">
    <citation type="journal article" date="2005" name="Science">
        <title>The transcriptional landscape of the mammalian genome.</title>
        <authorList>
            <person name="Carninci P."/>
            <person name="Kasukawa T."/>
            <person name="Katayama S."/>
            <person name="Gough J."/>
            <person name="Frith M.C."/>
            <person name="Maeda N."/>
            <person name="Oyama R."/>
            <person name="Ravasi T."/>
            <person name="Lenhard B."/>
            <person name="Wells C."/>
            <person name="Kodzius R."/>
            <person name="Shimokawa K."/>
            <person name="Bajic V.B."/>
            <person name="Brenner S.E."/>
            <person name="Batalov S."/>
            <person name="Forrest A.R."/>
            <person name="Zavolan M."/>
            <person name="Davis M.J."/>
            <person name="Wilming L.G."/>
            <person name="Aidinis V."/>
            <person name="Allen J.E."/>
            <person name="Ambesi-Impiombato A."/>
            <person name="Apweiler R."/>
            <person name="Aturaliya R.N."/>
            <person name="Bailey T.L."/>
            <person name="Bansal M."/>
            <person name="Baxter L."/>
            <person name="Beisel K.W."/>
            <person name="Bersano T."/>
            <person name="Bono H."/>
            <person name="Chalk A.M."/>
            <person name="Chiu K.P."/>
            <person name="Choudhary V."/>
            <person name="Christoffels A."/>
            <person name="Clutterbuck D.R."/>
            <person name="Crowe M.L."/>
            <person name="Dalla E."/>
            <person name="Dalrymple B.P."/>
            <person name="de Bono B."/>
            <person name="Della Gatta G."/>
            <person name="di Bernardo D."/>
            <person name="Down T."/>
            <person name="Engstrom P."/>
            <person name="Fagiolini M."/>
            <person name="Faulkner G."/>
            <person name="Fletcher C.F."/>
            <person name="Fukushima T."/>
            <person name="Furuno M."/>
            <person name="Futaki S."/>
            <person name="Gariboldi M."/>
            <person name="Georgii-Hemming P."/>
            <person name="Gingeras T.R."/>
            <person name="Gojobori T."/>
            <person name="Green R.E."/>
            <person name="Gustincich S."/>
            <person name="Harbers M."/>
            <person name="Hayashi Y."/>
            <person name="Hensch T.K."/>
            <person name="Hirokawa N."/>
            <person name="Hill D."/>
            <person name="Huminiecki L."/>
            <person name="Iacono M."/>
            <person name="Ikeo K."/>
            <person name="Iwama A."/>
            <person name="Ishikawa T."/>
            <person name="Jakt M."/>
            <person name="Kanapin A."/>
            <person name="Katoh M."/>
            <person name="Kawasawa Y."/>
            <person name="Kelso J."/>
            <person name="Kitamura H."/>
            <person name="Kitano H."/>
            <person name="Kollias G."/>
            <person name="Krishnan S.P."/>
            <person name="Kruger A."/>
            <person name="Kummerfeld S.K."/>
            <person name="Kurochkin I.V."/>
            <person name="Lareau L.F."/>
            <person name="Lazarevic D."/>
            <person name="Lipovich L."/>
            <person name="Liu J."/>
            <person name="Liuni S."/>
            <person name="McWilliam S."/>
            <person name="Madan Babu M."/>
            <person name="Madera M."/>
            <person name="Marchionni L."/>
            <person name="Matsuda H."/>
            <person name="Matsuzawa S."/>
            <person name="Miki H."/>
            <person name="Mignone F."/>
            <person name="Miyake S."/>
            <person name="Morris K."/>
            <person name="Mottagui-Tabar S."/>
            <person name="Mulder N."/>
            <person name="Nakano N."/>
            <person name="Nakauchi H."/>
            <person name="Ng P."/>
            <person name="Nilsson R."/>
            <person name="Nishiguchi S."/>
            <person name="Nishikawa S."/>
            <person name="Nori F."/>
            <person name="Ohara O."/>
            <person name="Okazaki Y."/>
            <person name="Orlando V."/>
            <person name="Pang K.C."/>
            <person name="Pavan W.J."/>
            <person name="Pavesi G."/>
            <person name="Pesole G."/>
            <person name="Petrovsky N."/>
            <person name="Piazza S."/>
            <person name="Reed J."/>
            <person name="Reid J.F."/>
            <person name="Ring B.Z."/>
            <person name="Ringwald M."/>
            <person name="Rost B."/>
            <person name="Ruan Y."/>
            <person name="Salzberg S.L."/>
            <person name="Sandelin A."/>
            <person name="Schneider C."/>
            <person name="Schoenbach C."/>
            <person name="Sekiguchi K."/>
            <person name="Semple C.A."/>
            <person name="Seno S."/>
            <person name="Sessa L."/>
            <person name="Sheng Y."/>
            <person name="Shibata Y."/>
            <person name="Shimada H."/>
            <person name="Shimada K."/>
            <person name="Silva D."/>
            <person name="Sinclair B."/>
            <person name="Sperling S."/>
            <person name="Stupka E."/>
            <person name="Sugiura K."/>
            <person name="Sultana R."/>
            <person name="Takenaka Y."/>
            <person name="Taki K."/>
            <person name="Tammoja K."/>
            <person name="Tan S.L."/>
            <person name="Tang S."/>
            <person name="Taylor M.S."/>
            <person name="Tegner J."/>
            <person name="Teichmann S.A."/>
            <person name="Ueda H.R."/>
            <person name="van Nimwegen E."/>
            <person name="Verardo R."/>
            <person name="Wei C.L."/>
            <person name="Yagi K."/>
            <person name="Yamanishi H."/>
            <person name="Zabarovsky E."/>
            <person name="Zhu S."/>
            <person name="Zimmer A."/>
            <person name="Hide W."/>
            <person name="Bult C."/>
            <person name="Grimmond S.M."/>
            <person name="Teasdale R.D."/>
            <person name="Liu E.T."/>
            <person name="Brusic V."/>
            <person name="Quackenbush J."/>
            <person name="Wahlestedt C."/>
            <person name="Mattick J.S."/>
            <person name="Hume D.A."/>
            <person name="Kai C."/>
            <person name="Sasaki D."/>
            <person name="Tomaru Y."/>
            <person name="Fukuda S."/>
            <person name="Kanamori-Katayama M."/>
            <person name="Suzuki M."/>
            <person name="Aoki J."/>
            <person name="Arakawa T."/>
            <person name="Iida J."/>
            <person name="Imamura K."/>
            <person name="Itoh M."/>
            <person name="Kato T."/>
            <person name="Kawaji H."/>
            <person name="Kawagashira N."/>
            <person name="Kawashima T."/>
            <person name="Kojima M."/>
            <person name="Kondo S."/>
            <person name="Konno H."/>
            <person name="Nakano K."/>
            <person name="Ninomiya N."/>
            <person name="Nishio T."/>
            <person name="Okada M."/>
            <person name="Plessy C."/>
            <person name="Shibata K."/>
            <person name="Shiraki T."/>
            <person name="Suzuki S."/>
            <person name="Tagami M."/>
            <person name="Waki K."/>
            <person name="Watahiki A."/>
            <person name="Okamura-Oho Y."/>
            <person name="Suzuki H."/>
            <person name="Kawai J."/>
            <person name="Hayashizaki Y."/>
        </authorList>
    </citation>
    <scope>NUCLEOTIDE SEQUENCE [LARGE SCALE MRNA]</scope>
    <source>
        <strain>C57BL/6J</strain>
        <tissue>Aorta</tissue>
        <tissue>Testis</tissue>
    </source>
</reference>
<reference evidence="5" key="3">
    <citation type="journal article" date="2004" name="Genome Res.">
        <title>The status, quality, and expansion of the NIH full-length cDNA project: the Mammalian Gene Collection (MGC).</title>
        <authorList>
            <consortium name="The MGC Project Team"/>
        </authorList>
    </citation>
    <scope>NUCLEOTIDE SEQUENCE [LARGE SCALE MRNA]</scope>
</reference>
<reference key="4">
    <citation type="journal article" date="2009" name="Immunity">
        <title>The phagosomal proteome in interferon-gamma-activated macrophages.</title>
        <authorList>
            <person name="Trost M."/>
            <person name="English L."/>
            <person name="Lemieux S."/>
            <person name="Courcelles M."/>
            <person name="Desjardins M."/>
            <person name="Thibault P."/>
        </authorList>
    </citation>
    <scope>IDENTIFICATION BY MASS SPECTROMETRY [LARGE SCALE ANALYSIS]</scope>
</reference>
<reference key="5">
    <citation type="journal article" date="2009" name="Nat. Biotechnol.">
        <title>Mass-spectrometric identification and relative quantification of N-linked cell surface glycoproteins.</title>
        <authorList>
            <person name="Wollscheid B."/>
            <person name="Bausch-Fluck D."/>
            <person name="Henderson C."/>
            <person name="O'Brien R."/>
            <person name="Bibel M."/>
            <person name="Schiess R."/>
            <person name="Aebersold R."/>
            <person name="Watts J.D."/>
        </authorList>
    </citation>
    <scope>GLYCOSYLATION [LARGE SCALE ANALYSIS] AT ASN-110</scope>
</reference>
<reference key="6">
    <citation type="journal article" date="2010" name="Cell">
        <title>A tissue-specific atlas of mouse protein phosphorylation and expression.</title>
        <authorList>
            <person name="Huttlin E.L."/>
            <person name="Jedrychowski M.P."/>
            <person name="Elias J.E."/>
            <person name="Goswami T."/>
            <person name="Rad R."/>
            <person name="Beausoleil S.A."/>
            <person name="Villen J."/>
            <person name="Haas W."/>
            <person name="Sowa M.E."/>
            <person name="Gygi S.P."/>
        </authorList>
    </citation>
    <scope>IDENTIFICATION BY MASS SPECTROMETRY [LARGE SCALE ANALYSIS]</scope>
    <source>
        <tissue>Brown adipose tissue</tissue>
        <tissue>Kidney</tissue>
        <tissue>Liver</tissue>
        <tissue>Lung</tissue>
        <tissue>Spleen</tissue>
    </source>
</reference>
<comment type="function">
    <text>May be involved in regulating membrane traffic to and from trans-Golgi network.</text>
</comment>
<comment type="subcellular location">
    <subcellularLocation>
        <location evidence="1">Cell membrane</location>
        <topology evidence="1">Single-pass type I membrane protein</topology>
    </subcellularLocation>
    <subcellularLocation>
        <location evidence="1">Golgi apparatus</location>
        <location evidence="1">trans-Golgi network membrane</location>
        <topology evidence="1">Single-pass type I membrane protein</topology>
    </subcellularLocation>
    <text evidence="1">Primarily in trans-Golgi network. Cycles between the trans-Golgi network and the cell surface returning via endosomes (By similarity).</text>
</comment>
<comment type="tissue specificity">
    <text>Widely expressed.</text>
</comment>
<comment type="miscellaneous">
    <text>Also found in strains BALB/c, C57BL/6 and DBA/2.</text>
</comment>
<protein>
    <recommendedName>
        <fullName>Trans-Golgi network integral membrane protein 1</fullName>
    </recommendedName>
    <alternativeName>
        <fullName>TGN38A</fullName>
    </alternativeName>
</protein>
<keyword id="KW-1003">Cell membrane</keyword>
<keyword id="KW-0325">Glycoprotein</keyword>
<keyword id="KW-0333">Golgi apparatus</keyword>
<keyword id="KW-0472">Membrane</keyword>
<keyword id="KW-1185">Reference proteome</keyword>
<keyword id="KW-0677">Repeat</keyword>
<keyword id="KW-0732">Signal</keyword>
<keyword id="KW-0812">Transmembrane</keyword>
<keyword id="KW-1133">Transmembrane helix</keyword>